<name>XYLA_HORVU</name>
<accession>Q40082</accession>
<accession>Q40081</accession>
<reference key="1">
    <citation type="journal article" date="1996" name="Eur. J. Biochem.">
        <title>Protein purification, and cloning and characterization of the cDNA and gene for xylose isomerase of barley.</title>
        <authorList>
            <person name="Kristo P.A."/>
            <person name="Saarelainen R."/>
            <person name="Fagerstroem R."/>
            <person name="Aho S."/>
            <person name="Korhola M."/>
        </authorList>
    </citation>
    <scope>NUCLEOTIDE SEQUENCE [GENOMIC DNA / MRNA]</scope>
    <scope>PARTIAL PROTEIN SEQUENCE</scope>
    <scope>CHARACTERIZATION</scope>
    <source>
        <strain>cv. Himalaya</strain>
    </source>
</reference>
<keyword id="KW-0119">Carbohydrate metabolism</keyword>
<keyword id="KW-0903">Direct protein sequencing</keyword>
<keyword id="KW-0413">Isomerase</keyword>
<keyword id="KW-0460">Magnesium</keyword>
<keyword id="KW-0464">Manganese</keyword>
<keyword id="KW-0479">Metal-binding</keyword>
<keyword id="KW-0859">Xylose metabolism</keyword>
<dbReference type="EC" id="5.3.1.5"/>
<dbReference type="EMBL" id="X95257">
    <property type="protein sequence ID" value="CAA64545.1"/>
    <property type="molecule type" value="mRNA"/>
</dbReference>
<dbReference type="EMBL" id="X95256">
    <property type="protein sequence ID" value="CAA64544.1"/>
    <property type="molecule type" value="Genomic_DNA"/>
</dbReference>
<dbReference type="PIR" id="S65466">
    <property type="entry name" value="S65466"/>
</dbReference>
<dbReference type="SMR" id="Q40082"/>
<dbReference type="ExpressionAtlas" id="Q40082">
    <property type="expression patterns" value="baseline and differential"/>
</dbReference>
<dbReference type="GO" id="GO:0046872">
    <property type="term" value="F:metal ion binding"/>
    <property type="evidence" value="ECO:0007669"/>
    <property type="project" value="UniProtKB-KW"/>
</dbReference>
<dbReference type="GO" id="GO:0009045">
    <property type="term" value="F:xylose isomerase activity"/>
    <property type="evidence" value="ECO:0007669"/>
    <property type="project" value="UniProtKB-EC"/>
</dbReference>
<dbReference type="GO" id="GO:0042732">
    <property type="term" value="P:D-xylose metabolic process"/>
    <property type="evidence" value="ECO:0007669"/>
    <property type="project" value="UniProtKB-KW"/>
</dbReference>
<dbReference type="FunFam" id="3.20.20.150:FF:000002">
    <property type="entry name" value="Xylose isomerase"/>
    <property type="match status" value="1"/>
</dbReference>
<dbReference type="Gene3D" id="3.20.20.150">
    <property type="entry name" value="Divalent-metal-dependent TIM barrel enzymes"/>
    <property type="match status" value="1"/>
</dbReference>
<dbReference type="HAMAP" id="MF_00455">
    <property type="entry name" value="Xylose_isom_A"/>
    <property type="match status" value="1"/>
</dbReference>
<dbReference type="InterPro" id="IPR036237">
    <property type="entry name" value="Xyl_isomerase-like_sf"/>
</dbReference>
<dbReference type="InterPro" id="IPR013452">
    <property type="entry name" value="Xylose_isom_bac"/>
</dbReference>
<dbReference type="InterPro" id="IPR001998">
    <property type="entry name" value="Xylose_isomerase"/>
</dbReference>
<dbReference type="NCBIfam" id="NF003998">
    <property type="entry name" value="PRK05474.1"/>
    <property type="match status" value="1"/>
</dbReference>
<dbReference type="NCBIfam" id="TIGR02630">
    <property type="entry name" value="xylose_isom_A"/>
    <property type="match status" value="1"/>
</dbReference>
<dbReference type="PANTHER" id="PTHR48408">
    <property type="match status" value="1"/>
</dbReference>
<dbReference type="PANTHER" id="PTHR48408:SF1">
    <property type="entry name" value="XYLOSE ISOMERASE"/>
    <property type="match status" value="1"/>
</dbReference>
<dbReference type="PRINTS" id="PR00688">
    <property type="entry name" value="XYLOSISMRASE"/>
</dbReference>
<dbReference type="SUPFAM" id="SSF51658">
    <property type="entry name" value="Xylose isomerase-like"/>
    <property type="match status" value="1"/>
</dbReference>
<dbReference type="PROSITE" id="PS51415">
    <property type="entry name" value="XYLOSE_ISOMERASE"/>
    <property type="match status" value="1"/>
</dbReference>
<proteinExistence type="evidence at protein level"/>
<evidence type="ECO:0000250" key="1"/>
<evidence type="ECO:0000305" key="2"/>
<sequence>MKGGELLVLLLASSLCLSAAVAAQETCPADIGAKCTDAASDDWEGEFFPGIDKINYEGPTSKKPLSYKWYNAEEVILGKKMKDWFRFSVAFWHTFRGTGGDPFGAPTKNWPWEDGTNSLAMAKRRMKAHFEFMEKLGVERWCFHDRDIAPDGKTLAETNANLDEIVELAKQLQSETNIKPLWGTAQLFMHPRYMHGAATSPEVKVYAYAAAQVKKALEVTHYLGGENYVFWGGREGYQTLLNTDMKRELEHLANFLQAAVNHKKKIGFNGTLLIEPKPQEPTKHQYDWDVATTFSFLQKFGLTGEFKINVECNHATLSGHSCHHELETARINDILGNIDANTGDPQVGWDTDEFLTDISEATLIMSSVVKNDGLAPGGFNFYAKLRRESTDVEDLFIAHISGMDTMARGRRNVVKLIEDGSLDELVRKRYQSFDTEIGAMIEAGKGDFETLEKKALEWGEPTVPSGKQELAEMLFQSAL</sequence>
<organism>
    <name type="scientific">Hordeum vulgare</name>
    <name type="common">Barley</name>
    <dbReference type="NCBI Taxonomy" id="4513"/>
    <lineage>
        <taxon>Eukaryota</taxon>
        <taxon>Viridiplantae</taxon>
        <taxon>Streptophyta</taxon>
        <taxon>Embryophyta</taxon>
        <taxon>Tracheophyta</taxon>
        <taxon>Spermatophyta</taxon>
        <taxon>Magnoliopsida</taxon>
        <taxon>Liliopsida</taxon>
        <taxon>Poales</taxon>
        <taxon>Poaceae</taxon>
        <taxon>BOP clade</taxon>
        <taxon>Pooideae</taxon>
        <taxon>Triticodae</taxon>
        <taxon>Triticeae</taxon>
        <taxon>Hordeinae</taxon>
        <taxon>Hordeum</taxon>
    </lineage>
</organism>
<gene>
    <name type="primary">XYLA</name>
</gene>
<feature type="chain" id="PRO_0000195825" description="Xylose isomerase">
    <location>
        <begin position="1"/>
        <end position="479"/>
    </location>
</feature>
<feature type="active site" evidence="1">
    <location>
        <position position="144"/>
    </location>
</feature>
<feature type="binding site" evidence="1">
    <location>
        <position position="275"/>
    </location>
    <ligand>
        <name>Mn(2+)</name>
        <dbReference type="ChEBI" id="CHEBI:29035"/>
        <label>1</label>
    </ligand>
</feature>
<feature type="binding site" evidence="1">
    <location>
        <position position="311"/>
    </location>
    <ligand>
        <name>Mn(2+)</name>
        <dbReference type="ChEBI" id="CHEBI:29035"/>
        <label>1</label>
    </ligand>
</feature>
<feature type="binding site" evidence="1">
    <location>
        <position position="311"/>
    </location>
    <ligand>
        <name>Mn(2+)</name>
        <dbReference type="ChEBI" id="CHEBI:29035"/>
        <label>2</label>
    </ligand>
</feature>
<feature type="binding site" evidence="1">
    <location>
        <position position="314"/>
    </location>
    <ligand>
        <name>Mn(2+)</name>
        <dbReference type="ChEBI" id="CHEBI:29035"/>
        <label>2</label>
    </ligand>
</feature>
<feature type="binding site" evidence="1">
    <location>
        <position position="339"/>
    </location>
    <ligand>
        <name>Mn(2+)</name>
        <dbReference type="ChEBI" id="CHEBI:29035"/>
        <label>1</label>
    </ligand>
</feature>
<feature type="binding site" evidence="1">
    <location>
        <position position="350"/>
    </location>
    <ligand>
        <name>Mn(2+)</name>
        <dbReference type="ChEBI" id="CHEBI:29035"/>
        <label>2</label>
    </ligand>
</feature>
<feature type="binding site" evidence="1">
    <location>
        <position position="352"/>
    </location>
    <ligand>
        <name>Mn(2+)</name>
        <dbReference type="ChEBI" id="CHEBI:29035"/>
        <label>2</label>
    </ligand>
</feature>
<feature type="binding site" evidence="1">
    <location>
        <position position="382"/>
    </location>
    <ligand>
        <name>Mn(2+)</name>
        <dbReference type="ChEBI" id="CHEBI:29035"/>
        <label>1</label>
    </ligand>
</feature>
<feature type="sequence conflict" description="In Ref. 1; CAA64544." evidence="2" ref="1">
    <original>AGKGDFETLEKKALEWGEPTVPSGKQ</original>
    <variation>GSSSFTAQCKYISAPMIVPYDLLLPA</variation>
    <location>
        <begin position="443"/>
        <end position="468"/>
    </location>
</feature>
<comment type="catalytic activity">
    <reaction>
        <text>alpha-D-xylose = alpha-D-xylulofuranose</text>
        <dbReference type="Rhea" id="RHEA:22816"/>
        <dbReference type="ChEBI" id="CHEBI:28518"/>
        <dbReference type="ChEBI" id="CHEBI:188998"/>
        <dbReference type="EC" id="5.3.1.5"/>
    </reaction>
</comment>
<comment type="cofactor">
    <cofactor>
        <name>Mn(2+)</name>
        <dbReference type="ChEBI" id="CHEBI:29035"/>
    </cofactor>
    <text>Binds 2 manganese ions per subunit.</text>
</comment>
<comment type="biophysicochemical properties">
    <phDependence>
        <text>Optimum pH is 7.0-9.0.</text>
    </phDependence>
    <temperatureDependence>
        <text>Optimum temperature is 60 degrees Celsius.</text>
    </temperatureDependence>
</comment>
<comment type="subunit">
    <text>Homodimer.</text>
</comment>
<comment type="similarity">
    <text evidence="2">Belongs to the xylose isomerase family.</text>
</comment>
<protein>
    <recommendedName>
        <fullName>Xylose isomerase</fullName>
        <ecNumber>5.3.1.5</ecNumber>
    </recommendedName>
</protein>